<sequence>MELKGKKVLVVGLGKSGLAAALFLRRRGAQVTVSDIRSAEALSKDIPALIEQGIAVEAGGHGLLTFRRQDLIVVSPGVPLDTPELVQVRKFGLPIIGEVELAARFLKGKTLAITGSNGKTTTTSLCGAILERAHQHVQVGGNIGLPVIALVDDSRDDGWSVLEISSFQLETTERFRPGIAVILNITPDHLDRHGSFENYVAAKERIFAAQTHDDALILNADDDAASRAAARASSRIFWFSRNRVIRQGAFVHEGNILFRAAEDAATEPILPLSEIPLKGAHNVENVLAAVCAARLAGVSAEAIRDAVRDFRAVEHRLEFVAEIGGVSFYNDSKATNVDAARKAIEAFPGGIHLILGGKDKNSDYRTLRPLMAGRVKAVYTIGSAAEKIMTHLDGAVPLIAAGTLDLAVNLAGGAASPGDVVLLAPACSSFDQFENYEQRGQVFKDLVLAHRGAAAWQNASA</sequence>
<dbReference type="EC" id="6.3.2.9" evidence="1"/>
<dbReference type="EMBL" id="CP001472">
    <property type="protein sequence ID" value="ACO34542.1"/>
    <property type="molecule type" value="Genomic_DNA"/>
</dbReference>
<dbReference type="RefSeq" id="WP_015896246.1">
    <property type="nucleotide sequence ID" value="NC_012483.1"/>
</dbReference>
<dbReference type="SMR" id="C1F460"/>
<dbReference type="FunCoup" id="C1F460">
    <property type="interactions" value="481"/>
</dbReference>
<dbReference type="STRING" id="240015.ACP_1088"/>
<dbReference type="KEGG" id="aca:ACP_1088"/>
<dbReference type="eggNOG" id="COG0771">
    <property type="taxonomic scope" value="Bacteria"/>
</dbReference>
<dbReference type="HOGENOM" id="CLU_032540_0_0_0"/>
<dbReference type="InParanoid" id="C1F460"/>
<dbReference type="OrthoDB" id="9809796at2"/>
<dbReference type="UniPathway" id="UPA00219"/>
<dbReference type="Proteomes" id="UP000002207">
    <property type="component" value="Chromosome"/>
</dbReference>
<dbReference type="GO" id="GO:0005737">
    <property type="term" value="C:cytoplasm"/>
    <property type="evidence" value="ECO:0007669"/>
    <property type="project" value="UniProtKB-SubCell"/>
</dbReference>
<dbReference type="GO" id="GO:0005524">
    <property type="term" value="F:ATP binding"/>
    <property type="evidence" value="ECO:0007669"/>
    <property type="project" value="UniProtKB-UniRule"/>
</dbReference>
<dbReference type="GO" id="GO:0008764">
    <property type="term" value="F:UDP-N-acetylmuramoylalanine-D-glutamate ligase activity"/>
    <property type="evidence" value="ECO:0007669"/>
    <property type="project" value="UniProtKB-UniRule"/>
</dbReference>
<dbReference type="GO" id="GO:0051301">
    <property type="term" value="P:cell division"/>
    <property type="evidence" value="ECO:0007669"/>
    <property type="project" value="UniProtKB-KW"/>
</dbReference>
<dbReference type="GO" id="GO:0071555">
    <property type="term" value="P:cell wall organization"/>
    <property type="evidence" value="ECO:0007669"/>
    <property type="project" value="UniProtKB-KW"/>
</dbReference>
<dbReference type="GO" id="GO:0009252">
    <property type="term" value="P:peptidoglycan biosynthetic process"/>
    <property type="evidence" value="ECO:0007669"/>
    <property type="project" value="UniProtKB-UniRule"/>
</dbReference>
<dbReference type="GO" id="GO:0008360">
    <property type="term" value="P:regulation of cell shape"/>
    <property type="evidence" value="ECO:0007669"/>
    <property type="project" value="UniProtKB-KW"/>
</dbReference>
<dbReference type="Gene3D" id="3.90.190.20">
    <property type="entry name" value="Mur ligase, C-terminal domain"/>
    <property type="match status" value="1"/>
</dbReference>
<dbReference type="Gene3D" id="3.40.1190.10">
    <property type="entry name" value="Mur-like, catalytic domain"/>
    <property type="match status" value="1"/>
</dbReference>
<dbReference type="Gene3D" id="3.40.50.720">
    <property type="entry name" value="NAD(P)-binding Rossmann-like Domain"/>
    <property type="match status" value="1"/>
</dbReference>
<dbReference type="HAMAP" id="MF_00639">
    <property type="entry name" value="MurD"/>
    <property type="match status" value="1"/>
</dbReference>
<dbReference type="InterPro" id="IPR036565">
    <property type="entry name" value="Mur-like_cat_sf"/>
</dbReference>
<dbReference type="InterPro" id="IPR004101">
    <property type="entry name" value="Mur_ligase_C"/>
</dbReference>
<dbReference type="InterPro" id="IPR036615">
    <property type="entry name" value="Mur_ligase_C_dom_sf"/>
</dbReference>
<dbReference type="InterPro" id="IPR013221">
    <property type="entry name" value="Mur_ligase_cen"/>
</dbReference>
<dbReference type="InterPro" id="IPR005762">
    <property type="entry name" value="MurD"/>
</dbReference>
<dbReference type="NCBIfam" id="TIGR01087">
    <property type="entry name" value="murD"/>
    <property type="match status" value="1"/>
</dbReference>
<dbReference type="PANTHER" id="PTHR43692">
    <property type="entry name" value="UDP-N-ACETYLMURAMOYLALANINE--D-GLUTAMATE LIGASE"/>
    <property type="match status" value="1"/>
</dbReference>
<dbReference type="PANTHER" id="PTHR43692:SF1">
    <property type="entry name" value="UDP-N-ACETYLMURAMOYLALANINE--D-GLUTAMATE LIGASE"/>
    <property type="match status" value="1"/>
</dbReference>
<dbReference type="Pfam" id="PF02875">
    <property type="entry name" value="Mur_ligase_C"/>
    <property type="match status" value="1"/>
</dbReference>
<dbReference type="Pfam" id="PF08245">
    <property type="entry name" value="Mur_ligase_M"/>
    <property type="match status" value="1"/>
</dbReference>
<dbReference type="Pfam" id="PF21799">
    <property type="entry name" value="MurD-like_N"/>
    <property type="match status" value="1"/>
</dbReference>
<dbReference type="SUPFAM" id="SSF51984">
    <property type="entry name" value="MurCD N-terminal domain"/>
    <property type="match status" value="1"/>
</dbReference>
<dbReference type="SUPFAM" id="SSF53623">
    <property type="entry name" value="MurD-like peptide ligases, catalytic domain"/>
    <property type="match status" value="1"/>
</dbReference>
<dbReference type="SUPFAM" id="SSF53244">
    <property type="entry name" value="MurD-like peptide ligases, peptide-binding domain"/>
    <property type="match status" value="1"/>
</dbReference>
<protein>
    <recommendedName>
        <fullName evidence="1">UDP-N-acetylmuramoylalanine--D-glutamate ligase</fullName>
        <ecNumber evidence="1">6.3.2.9</ecNumber>
    </recommendedName>
    <alternativeName>
        <fullName evidence="1">D-glutamic acid-adding enzyme</fullName>
    </alternativeName>
    <alternativeName>
        <fullName evidence="1">UDP-N-acetylmuramoyl-L-alanyl-D-glutamate synthetase</fullName>
    </alternativeName>
</protein>
<comment type="function">
    <text evidence="1">Cell wall formation. Catalyzes the addition of glutamate to the nucleotide precursor UDP-N-acetylmuramoyl-L-alanine (UMA).</text>
</comment>
<comment type="catalytic activity">
    <reaction evidence="1">
        <text>UDP-N-acetyl-alpha-D-muramoyl-L-alanine + D-glutamate + ATP = UDP-N-acetyl-alpha-D-muramoyl-L-alanyl-D-glutamate + ADP + phosphate + H(+)</text>
        <dbReference type="Rhea" id="RHEA:16429"/>
        <dbReference type="ChEBI" id="CHEBI:15378"/>
        <dbReference type="ChEBI" id="CHEBI:29986"/>
        <dbReference type="ChEBI" id="CHEBI:30616"/>
        <dbReference type="ChEBI" id="CHEBI:43474"/>
        <dbReference type="ChEBI" id="CHEBI:83898"/>
        <dbReference type="ChEBI" id="CHEBI:83900"/>
        <dbReference type="ChEBI" id="CHEBI:456216"/>
        <dbReference type="EC" id="6.3.2.9"/>
    </reaction>
</comment>
<comment type="pathway">
    <text evidence="1">Cell wall biogenesis; peptidoglycan biosynthesis.</text>
</comment>
<comment type="subcellular location">
    <subcellularLocation>
        <location evidence="1">Cytoplasm</location>
    </subcellularLocation>
</comment>
<comment type="similarity">
    <text evidence="1">Belongs to the MurCDEF family.</text>
</comment>
<organism>
    <name type="scientific">Acidobacterium capsulatum (strain ATCC 51196 / DSM 11244 / BCRC 80197 / JCM 7670 / NBRC 15755 / NCIMB 13165 / 161)</name>
    <dbReference type="NCBI Taxonomy" id="240015"/>
    <lineage>
        <taxon>Bacteria</taxon>
        <taxon>Pseudomonadati</taxon>
        <taxon>Acidobacteriota</taxon>
        <taxon>Terriglobia</taxon>
        <taxon>Terriglobales</taxon>
        <taxon>Acidobacteriaceae</taxon>
        <taxon>Acidobacterium</taxon>
    </lineage>
</organism>
<feature type="chain" id="PRO_1000147389" description="UDP-N-acetylmuramoylalanine--D-glutamate ligase">
    <location>
        <begin position="1"/>
        <end position="461"/>
    </location>
</feature>
<feature type="binding site" evidence="1">
    <location>
        <begin position="115"/>
        <end position="121"/>
    </location>
    <ligand>
        <name>ATP</name>
        <dbReference type="ChEBI" id="CHEBI:30616"/>
    </ligand>
</feature>
<evidence type="ECO:0000255" key="1">
    <source>
        <dbReference type="HAMAP-Rule" id="MF_00639"/>
    </source>
</evidence>
<keyword id="KW-0067">ATP-binding</keyword>
<keyword id="KW-0131">Cell cycle</keyword>
<keyword id="KW-0132">Cell division</keyword>
<keyword id="KW-0133">Cell shape</keyword>
<keyword id="KW-0961">Cell wall biogenesis/degradation</keyword>
<keyword id="KW-0963">Cytoplasm</keyword>
<keyword id="KW-0436">Ligase</keyword>
<keyword id="KW-0547">Nucleotide-binding</keyword>
<keyword id="KW-0573">Peptidoglycan synthesis</keyword>
<keyword id="KW-1185">Reference proteome</keyword>
<gene>
    <name evidence="1" type="primary">murD</name>
    <name type="ordered locus">ACP_1088</name>
</gene>
<name>MURD_ACIC5</name>
<reference key="1">
    <citation type="journal article" date="2009" name="Appl. Environ. Microbiol.">
        <title>Three genomes from the phylum Acidobacteria provide insight into the lifestyles of these microorganisms in soils.</title>
        <authorList>
            <person name="Ward N.L."/>
            <person name="Challacombe J.F."/>
            <person name="Janssen P.H."/>
            <person name="Henrissat B."/>
            <person name="Coutinho P.M."/>
            <person name="Wu M."/>
            <person name="Xie G."/>
            <person name="Haft D.H."/>
            <person name="Sait M."/>
            <person name="Badger J."/>
            <person name="Barabote R.D."/>
            <person name="Bradley B."/>
            <person name="Brettin T.S."/>
            <person name="Brinkac L.M."/>
            <person name="Bruce D."/>
            <person name="Creasy T."/>
            <person name="Daugherty S.C."/>
            <person name="Davidsen T.M."/>
            <person name="DeBoy R.T."/>
            <person name="Detter J.C."/>
            <person name="Dodson R.J."/>
            <person name="Durkin A.S."/>
            <person name="Ganapathy A."/>
            <person name="Gwinn-Giglio M."/>
            <person name="Han C.S."/>
            <person name="Khouri H."/>
            <person name="Kiss H."/>
            <person name="Kothari S.P."/>
            <person name="Madupu R."/>
            <person name="Nelson K.E."/>
            <person name="Nelson W.C."/>
            <person name="Paulsen I."/>
            <person name="Penn K."/>
            <person name="Ren Q."/>
            <person name="Rosovitz M.J."/>
            <person name="Selengut J.D."/>
            <person name="Shrivastava S."/>
            <person name="Sullivan S.A."/>
            <person name="Tapia R."/>
            <person name="Thompson L.S."/>
            <person name="Watkins K.L."/>
            <person name="Yang Q."/>
            <person name="Yu C."/>
            <person name="Zafar N."/>
            <person name="Zhou L."/>
            <person name="Kuske C.R."/>
        </authorList>
    </citation>
    <scope>NUCLEOTIDE SEQUENCE [LARGE SCALE GENOMIC DNA]</scope>
    <source>
        <strain>ATCC 51196 / DSM 11244 / BCRC 80197 / JCM 7670 / NBRC 15755 / NCIMB 13165 / 161</strain>
    </source>
</reference>
<accession>C1F460</accession>
<proteinExistence type="inferred from homology"/>